<accession>P37883</accession>
<dbReference type="EMBL" id="D17294">
    <property type="protein sequence ID" value="BAA04127.1"/>
    <property type="molecule type" value="mRNA"/>
</dbReference>
<dbReference type="RefSeq" id="NP_001268312.1">
    <property type="nucleotide sequence ID" value="NM_001281383.1"/>
</dbReference>
<dbReference type="SMR" id="P37883"/>
<dbReference type="STRING" id="10036.ENSMAUP00000019550"/>
<dbReference type="GeneID" id="101833257"/>
<dbReference type="KEGG" id="maua:101833257"/>
<dbReference type="CTD" id="9133"/>
<dbReference type="eggNOG" id="KOG0653">
    <property type="taxonomic scope" value="Eukaryota"/>
</dbReference>
<dbReference type="OrthoDB" id="5590282at2759"/>
<dbReference type="Proteomes" id="UP000189706">
    <property type="component" value="Unplaced"/>
</dbReference>
<dbReference type="GO" id="GO:0016538">
    <property type="term" value="F:cyclin-dependent protein serine/threonine kinase regulator activity"/>
    <property type="evidence" value="ECO:0007669"/>
    <property type="project" value="InterPro"/>
</dbReference>
<dbReference type="GO" id="GO:0051301">
    <property type="term" value="P:cell division"/>
    <property type="evidence" value="ECO:0007669"/>
    <property type="project" value="UniProtKB-KW"/>
</dbReference>
<dbReference type="GO" id="GO:0044772">
    <property type="term" value="P:mitotic cell cycle phase transition"/>
    <property type="evidence" value="ECO:0007669"/>
    <property type="project" value="InterPro"/>
</dbReference>
<dbReference type="CDD" id="cd20570">
    <property type="entry name" value="CYCLIN_CCNB2_rpt2"/>
    <property type="match status" value="1"/>
</dbReference>
<dbReference type="FunFam" id="1.10.472.10:FF:000027">
    <property type="entry name" value="G2/mitotic-specific cyclin-B1"/>
    <property type="match status" value="1"/>
</dbReference>
<dbReference type="Gene3D" id="1.10.472.10">
    <property type="entry name" value="Cyclin-like"/>
    <property type="match status" value="2"/>
</dbReference>
<dbReference type="InterPro" id="IPR039361">
    <property type="entry name" value="Cyclin"/>
</dbReference>
<dbReference type="InterPro" id="IPR013763">
    <property type="entry name" value="Cyclin-like_dom"/>
</dbReference>
<dbReference type="InterPro" id="IPR036915">
    <property type="entry name" value="Cyclin-like_sf"/>
</dbReference>
<dbReference type="InterPro" id="IPR046965">
    <property type="entry name" value="Cyclin_A/B-like"/>
</dbReference>
<dbReference type="InterPro" id="IPR004367">
    <property type="entry name" value="Cyclin_C-dom"/>
</dbReference>
<dbReference type="InterPro" id="IPR006671">
    <property type="entry name" value="Cyclin_N"/>
</dbReference>
<dbReference type="InterPro" id="IPR048258">
    <property type="entry name" value="Cyclins_cyclin-box"/>
</dbReference>
<dbReference type="PANTHER" id="PTHR10177">
    <property type="entry name" value="CYCLINS"/>
    <property type="match status" value="1"/>
</dbReference>
<dbReference type="Pfam" id="PF02984">
    <property type="entry name" value="Cyclin_C"/>
    <property type="match status" value="1"/>
</dbReference>
<dbReference type="Pfam" id="PF00134">
    <property type="entry name" value="Cyclin_N"/>
    <property type="match status" value="1"/>
</dbReference>
<dbReference type="PIRSF" id="PIRSF001771">
    <property type="entry name" value="Cyclin_A_B_D_E"/>
    <property type="match status" value="1"/>
</dbReference>
<dbReference type="SMART" id="SM00385">
    <property type="entry name" value="CYCLIN"/>
    <property type="match status" value="2"/>
</dbReference>
<dbReference type="SMART" id="SM01332">
    <property type="entry name" value="Cyclin_C"/>
    <property type="match status" value="1"/>
</dbReference>
<dbReference type="SUPFAM" id="SSF47954">
    <property type="entry name" value="Cyclin-like"/>
    <property type="match status" value="2"/>
</dbReference>
<dbReference type="PROSITE" id="PS00292">
    <property type="entry name" value="CYCLINS"/>
    <property type="match status" value="1"/>
</dbReference>
<keyword id="KW-0131">Cell cycle</keyword>
<keyword id="KW-0132">Cell division</keyword>
<keyword id="KW-0195">Cyclin</keyword>
<keyword id="KW-0498">Mitosis</keyword>
<keyword id="KW-0597">Phosphoprotein</keyword>
<keyword id="KW-1185">Reference proteome</keyword>
<proteinExistence type="evidence at transcript level"/>
<gene>
    <name type="primary">CCNB2</name>
</gene>
<sequence length="397" mass="45279">MALLRRPTVSSDLKNIDTGVNPKAKSHVTIRRAVLEEIGNKVRSRAAPVAKKPQNTKIPVQPTKVTHVNKQPKPTASVKPVQMETLAPKDPPAPEDVSMKEENLCQAFSDALLCKIEDIDNEDWENPQLCSDYVKDIYQYLRQLEVLQSINPHFLDGRDINGRMRAILVDWLVQVHSKFRLLQETLYMCIAIMDRFLQAQPVCRKKLQLVGITALLLASKYEEMFSPNIEDFVYITDNAYTSSQIREMETLILKELKFELGRPLPLHFLRRASKAGEVDVEQHTLAKYLMELTLIDYDMVHYHPSQVAAAASCLSQKVLGQGKWNLKQQYYTGYMETEVLEVMQHMAKNVVKVNENLTKFIAVKNKYASSRLLKISTIPQLNSKTIKDLASPLMGRL</sequence>
<organism>
    <name type="scientific">Mesocricetus auratus</name>
    <name type="common">Golden hamster</name>
    <dbReference type="NCBI Taxonomy" id="10036"/>
    <lineage>
        <taxon>Eukaryota</taxon>
        <taxon>Metazoa</taxon>
        <taxon>Chordata</taxon>
        <taxon>Craniata</taxon>
        <taxon>Vertebrata</taxon>
        <taxon>Euteleostomi</taxon>
        <taxon>Mammalia</taxon>
        <taxon>Eutheria</taxon>
        <taxon>Euarchontoglires</taxon>
        <taxon>Glires</taxon>
        <taxon>Rodentia</taxon>
        <taxon>Myomorpha</taxon>
        <taxon>Muroidea</taxon>
        <taxon>Cricetidae</taxon>
        <taxon>Cricetinae</taxon>
        <taxon>Mesocricetus</taxon>
    </lineage>
</organism>
<comment type="function">
    <text>Essential for the control of the cell cycle at the G2/M (mitosis) transition.</text>
</comment>
<comment type="subunit">
    <text>Interacts with the CDK1 protein kinase to form a serine/threonine kinase holoenzyme complex also known as maturation promoting factor (MPF). The cyclin subunit imparts substrate specificity to the complex.</text>
</comment>
<comment type="developmental stage">
    <text>Accumulates steadily during G2 and is abruptly destroyed at mitosis.</text>
</comment>
<comment type="similarity">
    <text evidence="3">Belongs to the cyclin family. Cyclin AB subfamily.</text>
</comment>
<feature type="chain" id="PRO_0000080362" description="G2/mitotic-specific cyclin-B2">
    <location>
        <begin position="1"/>
        <end position="397"/>
    </location>
</feature>
<feature type="region of interest" description="Disordered" evidence="2">
    <location>
        <begin position="1"/>
        <end position="20"/>
    </location>
</feature>
<feature type="region of interest" description="Disordered" evidence="2">
    <location>
        <begin position="64"/>
        <end position="97"/>
    </location>
</feature>
<feature type="compositionally biased region" description="Polar residues" evidence="2">
    <location>
        <begin position="64"/>
        <end position="74"/>
    </location>
</feature>
<feature type="modified residue" description="Phosphothreonine" evidence="1">
    <location>
        <position position="8"/>
    </location>
</feature>
<feature type="modified residue" description="Phosphoserine" evidence="1">
    <location>
        <position position="11"/>
    </location>
</feature>
<feature type="modified residue" description="Phosphoserine" evidence="1">
    <location>
        <position position="77"/>
    </location>
</feature>
<feature type="modified residue" description="Phosphoserine" evidence="1">
    <location>
        <position position="98"/>
    </location>
</feature>
<feature type="modified residue" description="Phosphoserine" evidence="1">
    <location>
        <position position="391"/>
    </location>
</feature>
<evidence type="ECO:0000250" key="1">
    <source>
        <dbReference type="UniProtKB" id="O95067"/>
    </source>
</evidence>
<evidence type="ECO:0000256" key="2">
    <source>
        <dbReference type="SAM" id="MobiDB-lite"/>
    </source>
</evidence>
<evidence type="ECO:0000305" key="3"/>
<protein>
    <recommendedName>
        <fullName>G2/mitotic-specific cyclin-B2</fullName>
    </recommendedName>
</protein>
<reference key="1">
    <citation type="submission" date="1993-07" db="EMBL/GenBank/DDBJ databases">
        <title>Nucleotide sequence of hamster cyclin B1 and B2 cDNA.</title>
        <authorList>
            <person name="Shiraki T."/>
            <person name="Yamashita K."/>
            <person name="Nishitani H."/>
            <person name="Nishimoto T."/>
        </authorList>
    </citation>
    <scope>NUCLEOTIDE SEQUENCE [MRNA]</scope>
</reference>
<name>CCNB2_MESAU</name>